<organism>
    <name type="scientific">Shigella boydii serotype 18 (strain CDC 3083-94 / BS512)</name>
    <dbReference type="NCBI Taxonomy" id="344609"/>
    <lineage>
        <taxon>Bacteria</taxon>
        <taxon>Pseudomonadati</taxon>
        <taxon>Pseudomonadota</taxon>
        <taxon>Gammaproteobacteria</taxon>
        <taxon>Enterobacterales</taxon>
        <taxon>Enterobacteriaceae</taxon>
        <taxon>Shigella</taxon>
    </lineage>
</organism>
<reference key="1">
    <citation type="submission" date="2008-05" db="EMBL/GenBank/DDBJ databases">
        <title>Complete sequence of Shigella boydii serotype 18 strain BS512.</title>
        <authorList>
            <person name="Rasko D.A."/>
            <person name="Rosovitz M."/>
            <person name="Maurelli A.T."/>
            <person name="Myers G."/>
            <person name="Seshadri R."/>
            <person name="Cer R."/>
            <person name="Jiang L."/>
            <person name="Ravel J."/>
            <person name="Sebastian Y."/>
        </authorList>
    </citation>
    <scope>NUCLEOTIDE SEQUENCE [LARGE SCALE GENOMIC DNA]</scope>
    <source>
        <strain>CDC 3083-94 / BS512</strain>
    </source>
</reference>
<gene>
    <name evidence="1" type="primary">argG</name>
    <name type="ordered locus">SbBS512_E3599</name>
</gene>
<dbReference type="EC" id="6.3.4.5" evidence="1"/>
<dbReference type="EMBL" id="CP001063">
    <property type="protein sequence ID" value="ACD09925.1"/>
    <property type="molecule type" value="Genomic_DNA"/>
</dbReference>
<dbReference type="RefSeq" id="WP_000207691.1">
    <property type="nucleotide sequence ID" value="NC_010658.1"/>
</dbReference>
<dbReference type="SMR" id="B2U204"/>
<dbReference type="STRING" id="344609.SbBS512_E3599"/>
<dbReference type="KEGG" id="sbc:SbBS512_E3599"/>
<dbReference type="HOGENOM" id="CLU_032784_4_1_6"/>
<dbReference type="UniPathway" id="UPA00068">
    <property type="reaction ID" value="UER00113"/>
</dbReference>
<dbReference type="Proteomes" id="UP000001030">
    <property type="component" value="Chromosome"/>
</dbReference>
<dbReference type="GO" id="GO:0005737">
    <property type="term" value="C:cytoplasm"/>
    <property type="evidence" value="ECO:0007669"/>
    <property type="project" value="UniProtKB-SubCell"/>
</dbReference>
<dbReference type="GO" id="GO:0004055">
    <property type="term" value="F:argininosuccinate synthase activity"/>
    <property type="evidence" value="ECO:0007669"/>
    <property type="project" value="UniProtKB-UniRule"/>
</dbReference>
<dbReference type="GO" id="GO:0005524">
    <property type="term" value="F:ATP binding"/>
    <property type="evidence" value="ECO:0007669"/>
    <property type="project" value="UniProtKB-UniRule"/>
</dbReference>
<dbReference type="GO" id="GO:0042803">
    <property type="term" value="F:protein homodimerization activity"/>
    <property type="evidence" value="ECO:0007669"/>
    <property type="project" value="InterPro"/>
</dbReference>
<dbReference type="GO" id="GO:0000053">
    <property type="term" value="P:argininosuccinate metabolic process"/>
    <property type="evidence" value="ECO:0007669"/>
    <property type="project" value="TreeGrafter"/>
</dbReference>
<dbReference type="GO" id="GO:0006526">
    <property type="term" value="P:L-arginine biosynthetic process"/>
    <property type="evidence" value="ECO:0007669"/>
    <property type="project" value="UniProtKB-UniRule"/>
</dbReference>
<dbReference type="GO" id="GO:0000050">
    <property type="term" value="P:urea cycle"/>
    <property type="evidence" value="ECO:0007669"/>
    <property type="project" value="TreeGrafter"/>
</dbReference>
<dbReference type="CDD" id="cd01999">
    <property type="entry name" value="ASS"/>
    <property type="match status" value="1"/>
</dbReference>
<dbReference type="FunFam" id="1.10.287.400:FF:000001">
    <property type="entry name" value="Argininosuccinate synthase"/>
    <property type="match status" value="1"/>
</dbReference>
<dbReference type="Gene3D" id="1.10.287.400">
    <property type="match status" value="1"/>
</dbReference>
<dbReference type="Gene3D" id="3.90.1260.10">
    <property type="entry name" value="Argininosuccinate synthetase, chain A, domain 2"/>
    <property type="match status" value="1"/>
</dbReference>
<dbReference type="Gene3D" id="3.40.50.620">
    <property type="entry name" value="HUPs"/>
    <property type="match status" value="1"/>
</dbReference>
<dbReference type="HAMAP" id="MF_00581">
    <property type="entry name" value="Arg_succ_synth_type2"/>
    <property type="match status" value="1"/>
</dbReference>
<dbReference type="InterPro" id="IPR023437">
    <property type="entry name" value="Arg_succ_synth_type2_subfam"/>
</dbReference>
<dbReference type="InterPro" id="IPR048268">
    <property type="entry name" value="Arginosuc_syn_C"/>
</dbReference>
<dbReference type="InterPro" id="IPR048267">
    <property type="entry name" value="Arginosuc_syn_N"/>
</dbReference>
<dbReference type="InterPro" id="IPR001518">
    <property type="entry name" value="Arginosuc_synth"/>
</dbReference>
<dbReference type="InterPro" id="IPR018223">
    <property type="entry name" value="Arginosuc_synth_CS"/>
</dbReference>
<dbReference type="InterPro" id="IPR023434">
    <property type="entry name" value="Arginosuc_synth_type_1_subfam"/>
</dbReference>
<dbReference type="InterPro" id="IPR024074">
    <property type="entry name" value="AS_cat/multimer_dom_body"/>
</dbReference>
<dbReference type="InterPro" id="IPR024073">
    <property type="entry name" value="AS_multimer_C_tail"/>
</dbReference>
<dbReference type="InterPro" id="IPR014729">
    <property type="entry name" value="Rossmann-like_a/b/a_fold"/>
</dbReference>
<dbReference type="NCBIfam" id="TIGR00032">
    <property type="entry name" value="argG"/>
    <property type="match status" value="1"/>
</dbReference>
<dbReference type="NCBIfam" id="NF003779">
    <property type="entry name" value="PRK05370.1"/>
    <property type="match status" value="1"/>
</dbReference>
<dbReference type="PANTHER" id="PTHR11587">
    <property type="entry name" value="ARGININOSUCCINATE SYNTHASE"/>
    <property type="match status" value="1"/>
</dbReference>
<dbReference type="PANTHER" id="PTHR11587:SF2">
    <property type="entry name" value="ARGININOSUCCINATE SYNTHASE"/>
    <property type="match status" value="1"/>
</dbReference>
<dbReference type="Pfam" id="PF20979">
    <property type="entry name" value="Arginosuc_syn_C"/>
    <property type="match status" value="1"/>
</dbReference>
<dbReference type="Pfam" id="PF00764">
    <property type="entry name" value="Arginosuc_synth"/>
    <property type="match status" value="1"/>
</dbReference>
<dbReference type="SUPFAM" id="SSF52402">
    <property type="entry name" value="Adenine nucleotide alpha hydrolases-like"/>
    <property type="match status" value="1"/>
</dbReference>
<dbReference type="SUPFAM" id="SSF69864">
    <property type="entry name" value="Argininosuccinate synthetase, C-terminal domain"/>
    <property type="match status" value="1"/>
</dbReference>
<dbReference type="PROSITE" id="PS00564">
    <property type="entry name" value="ARGININOSUCCIN_SYN_1"/>
    <property type="match status" value="1"/>
</dbReference>
<dbReference type="PROSITE" id="PS00565">
    <property type="entry name" value="ARGININOSUCCIN_SYN_2"/>
    <property type="match status" value="1"/>
</dbReference>
<proteinExistence type="inferred from homology"/>
<name>ASSY_SHIB3</name>
<sequence>MTTILKHLPVGQRIGIAFSGGLDTSAALLWMRQKGAVPYAYTANLGQPDEEDYDAIPRRAMEYGAENARLIDCRKQLVAEGIAAIQCGAFHNTTGGLTYFNTTPLGRAVTGTMLVAAMKEDGVNIWGDGSTYKGNDIERFYRYGLLTNAELQIYKPWLDTDFIDELGGRHEMSEFMIACGFDYKMSVEKAYSTDSNMLGATHEAKDLEYLNSSVKIVNPIMGVKFWDESVKIPAEEVTVRFEQGHPVALNGKTFSNDVEMMLEANRIGGRHGLGMSDQIENRIIEAKSRGIYEAPGMALLHIAYERLLTGIHNEDTIEQYHAHGRQLGRLLYQGRWFDSQALMLRDSLQRWVASQITGEVTLELRRGNDYSILNTVSENLTYKPERLTMEKGDSVFSPDDRIGQLTMRNLDITDTREKLFGYAKTGLLSSSATSGVPQVENMENKGQ</sequence>
<comment type="catalytic activity">
    <reaction evidence="1">
        <text>L-citrulline + L-aspartate + ATP = 2-(N(omega)-L-arginino)succinate + AMP + diphosphate + H(+)</text>
        <dbReference type="Rhea" id="RHEA:10932"/>
        <dbReference type="ChEBI" id="CHEBI:15378"/>
        <dbReference type="ChEBI" id="CHEBI:29991"/>
        <dbReference type="ChEBI" id="CHEBI:30616"/>
        <dbReference type="ChEBI" id="CHEBI:33019"/>
        <dbReference type="ChEBI" id="CHEBI:57472"/>
        <dbReference type="ChEBI" id="CHEBI:57743"/>
        <dbReference type="ChEBI" id="CHEBI:456215"/>
        <dbReference type="EC" id="6.3.4.5"/>
    </reaction>
</comment>
<comment type="pathway">
    <text evidence="1">Amino-acid biosynthesis; L-arginine biosynthesis; L-arginine from L-ornithine and carbamoyl phosphate: step 2/3.</text>
</comment>
<comment type="subunit">
    <text evidence="1">Homotetramer.</text>
</comment>
<comment type="subcellular location">
    <subcellularLocation>
        <location evidence="1">Cytoplasm</location>
    </subcellularLocation>
</comment>
<comment type="similarity">
    <text evidence="1">Belongs to the argininosuccinate synthase family. Type 2 subfamily.</text>
</comment>
<keyword id="KW-0028">Amino-acid biosynthesis</keyword>
<keyword id="KW-0055">Arginine biosynthesis</keyword>
<keyword id="KW-0067">ATP-binding</keyword>
<keyword id="KW-0963">Cytoplasm</keyword>
<keyword id="KW-0436">Ligase</keyword>
<keyword id="KW-0547">Nucleotide-binding</keyword>
<keyword id="KW-1185">Reference proteome</keyword>
<accession>B2U204</accession>
<protein>
    <recommendedName>
        <fullName evidence="1">Argininosuccinate synthase</fullName>
        <ecNumber evidence="1">6.3.4.5</ecNumber>
    </recommendedName>
    <alternativeName>
        <fullName evidence="1">Citrulline--aspartate ligase</fullName>
    </alternativeName>
</protein>
<feature type="chain" id="PRO_1000129769" description="Argininosuccinate synthase">
    <location>
        <begin position="1"/>
        <end position="447"/>
    </location>
</feature>
<feature type="binding site" evidence="1">
    <location>
        <begin position="17"/>
        <end position="25"/>
    </location>
    <ligand>
        <name>ATP</name>
        <dbReference type="ChEBI" id="CHEBI:30616"/>
    </ligand>
</feature>
<feature type="binding site" evidence="1">
    <location>
        <position position="43"/>
    </location>
    <ligand>
        <name>ATP</name>
        <dbReference type="ChEBI" id="CHEBI:30616"/>
    </ligand>
</feature>
<feature type="binding site" evidence="1">
    <location>
        <position position="99"/>
    </location>
    <ligand>
        <name>L-citrulline</name>
        <dbReference type="ChEBI" id="CHEBI:57743"/>
    </ligand>
</feature>
<feature type="binding site" evidence="1">
    <location>
        <position position="129"/>
    </location>
    <ligand>
        <name>ATP</name>
        <dbReference type="ChEBI" id="CHEBI:30616"/>
    </ligand>
</feature>
<feature type="binding site" evidence="1">
    <location>
        <position position="131"/>
    </location>
    <ligand>
        <name>ATP</name>
        <dbReference type="ChEBI" id="CHEBI:30616"/>
    </ligand>
</feature>
<feature type="binding site" evidence="1">
    <location>
        <position position="131"/>
    </location>
    <ligand>
        <name>L-aspartate</name>
        <dbReference type="ChEBI" id="CHEBI:29991"/>
    </ligand>
</feature>
<feature type="binding site" evidence="1">
    <location>
        <position position="135"/>
    </location>
    <ligand>
        <name>L-aspartate</name>
        <dbReference type="ChEBI" id="CHEBI:29991"/>
    </ligand>
</feature>
<feature type="binding site" evidence="1">
    <location>
        <position position="135"/>
    </location>
    <ligand>
        <name>L-citrulline</name>
        <dbReference type="ChEBI" id="CHEBI:57743"/>
    </ligand>
</feature>
<feature type="binding site" evidence="1">
    <location>
        <position position="136"/>
    </location>
    <ligand>
        <name>ATP</name>
        <dbReference type="ChEBI" id="CHEBI:30616"/>
    </ligand>
</feature>
<feature type="binding site" evidence="1">
    <location>
        <position position="136"/>
    </location>
    <ligand>
        <name>L-aspartate</name>
        <dbReference type="ChEBI" id="CHEBI:29991"/>
    </ligand>
</feature>
<feature type="binding site" evidence="1">
    <location>
        <position position="139"/>
    </location>
    <ligand>
        <name>L-citrulline</name>
        <dbReference type="ChEBI" id="CHEBI:57743"/>
    </ligand>
</feature>
<feature type="binding site" evidence="1">
    <location>
        <position position="192"/>
    </location>
    <ligand>
        <name>L-citrulline</name>
        <dbReference type="ChEBI" id="CHEBI:57743"/>
    </ligand>
</feature>
<feature type="binding site" evidence="1">
    <location>
        <position position="194"/>
    </location>
    <ligand>
        <name>ATP</name>
        <dbReference type="ChEBI" id="CHEBI:30616"/>
    </ligand>
</feature>
<feature type="binding site" evidence="1">
    <location>
        <position position="201"/>
    </location>
    <ligand>
        <name>L-citrulline</name>
        <dbReference type="ChEBI" id="CHEBI:57743"/>
    </ligand>
</feature>
<feature type="binding site" evidence="1">
    <location>
        <position position="203"/>
    </location>
    <ligand>
        <name>L-citrulline</name>
        <dbReference type="ChEBI" id="CHEBI:57743"/>
    </ligand>
</feature>
<feature type="binding site" evidence="1">
    <location>
        <position position="280"/>
    </location>
    <ligand>
        <name>L-citrulline</name>
        <dbReference type="ChEBI" id="CHEBI:57743"/>
    </ligand>
</feature>
<evidence type="ECO:0000255" key="1">
    <source>
        <dbReference type="HAMAP-Rule" id="MF_00581"/>
    </source>
</evidence>